<evidence type="ECO:0000255" key="1">
    <source>
        <dbReference type="HAMAP-Rule" id="MF_01288"/>
    </source>
</evidence>
<keyword id="KW-0456">Lyase</keyword>
<keyword id="KW-0460">Magnesium</keyword>
<keyword id="KW-0479">Metal-binding</keyword>
<name>RHMD_SALPK</name>
<feature type="chain" id="PRO_1000140377" description="L-rhamnonate dehydratase">
    <location>
        <begin position="1"/>
        <end position="405"/>
    </location>
</feature>
<feature type="active site" description="Proton acceptor" evidence="1">
    <location>
        <position position="329"/>
    </location>
</feature>
<feature type="binding site" evidence="1">
    <location>
        <position position="33"/>
    </location>
    <ligand>
        <name>substrate</name>
    </ligand>
</feature>
<feature type="binding site" evidence="1">
    <location>
        <position position="59"/>
    </location>
    <ligand>
        <name>substrate</name>
    </ligand>
</feature>
<feature type="binding site" evidence="1">
    <location>
        <position position="226"/>
    </location>
    <ligand>
        <name>Mg(2+)</name>
        <dbReference type="ChEBI" id="CHEBI:18420"/>
    </ligand>
</feature>
<feature type="binding site" evidence="1">
    <location>
        <position position="252"/>
    </location>
    <ligand>
        <name>Mg(2+)</name>
        <dbReference type="ChEBI" id="CHEBI:18420"/>
    </ligand>
</feature>
<feature type="binding site" evidence="1">
    <location>
        <position position="280"/>
    </location>
    <ligand>
        <name>Mg(2+)</name>
        <dbReference type="ChEBI" id="CHEBI:18420"/>
    </ligand>
</feature>
<feature type="binding site" evidence="1">
    <location>
        <position position="349"/>
    </location>
    <ligand>
        <name>substrate</name>
    </ligand>
</feature>
<feature type="site" description="Increases basicity of active site His" evidence="1">
    <location>
        <position position="302"/>
    </location>
</feature>
<feature type="site" description="Transition state stabilizer" evidence="1">
    <location>
        <position position="349"/>
    </location>
</feature>
<sequence>MENIMTLPKIKHVRAWFIGGATAEKGAGGGDYHDQGGNHWIDDHIATPMSKYRDYEQSRQSFGINVLGTLIVEVEAENGQTGFAVSTAGEMGCFIVEKHLNRFIEGKCVSDIKLIHDQMLGATMYYSGSGGLVMNTISCVDLALWDLFGKVVGLPVYKLLGGAVRDEIQFYATGARPDLAKEMGFIGGKMPAHWGPHDGDAGIRKDAAMVADMREKCGPDFWLMLDCWMSQDVNYATKLAHACAPFNLKWIEECLPPQQYEGYRELKRNAPAGMMVTSGEHHGTLQSFRTLAETGIDIMQPDVGWCGGLTTLVEIAALAKSRGQLVVPHGSSVYSHHAVITFTNTPFSEFLMTSPDCSTLRPQFDPILLDEPVPVNGRIHKSVLDKPGFGVELNRDCHLKRPYSH</sequence>
<comment type="function">
    <text evidence="1">Catalyzes the dehydration of L-rhamnonate to 2-keto-3-deoxy-L-rhamnonate (KDR).</text>
</comment>
<comment type="catalytic activity">
    <reaction evidence="1">
        <text>L-rhamnonate = 2-dehydro-3-deoxy-L-rhamnonate + H2O</text>
        <dbReference type="Rhea" id="RHEA:23080"/>
        <dbReference type="ChEBI" id="CHEBI:15377"/>
        <dbReference type="ChEBI" id="CHEBI:58118"/>
        <dbReference type="ChEBI" id="CHEBI:58371"/>
        <dbReference type="EC" id="4.2.1.90"/>
    </reaction>
</comment>
<comment type="cofactor">
    <cofactor evidence="1">
        <name>Mg(2+)</name>
        <dbReference type="ChEBI" id="CHEBI:18420"/>
    </cofactor>
    <text evidence="1">Binds 1 Mg(2+) ion per subunit.</text>
</comment>
<comment type="subunit">
    <text evidence="1">Homooctamer; tetramer of dimers.</text>
</comment>
<comment type="miscellaneous">
    <text evidence="1">Reaction proceeds via a syn dehydration.</text>
</comment>
<comment type="similarity">
    <text evidence="1">Belongs to the mandelate racemase/muconate lactonizing enzyme family. RhamD subfamily.</text>
</comment>
<accession>B5BCQ4</accession>
<gene>
    <name evidence="1" type="primary">rhmD</name>
    <name type="ordered locus">SSPA0536</name>
</gene>
<reference key="1">
    <citation type="journal article" date="2009" name="BMC Genomics">
        <title>Pseudogene accumulation in the evolutionary histories of Salmonella enterica serovars Paratyphi A and Typhi.</title>
        <authorList>
            <person name="Holt K.E."/>
            <person name="Thomson N.R."/>
            <person name="Wain J."/>
            <person name="Langridge G.C."/>
            <person name="Hasan R."/>
            <person name="Bhutta Z.A."/>
            <person name="Quail M.A."/>
            <person name="Norbertczak H."/>
            <person name="Walker D."/>
            <person name="Simmonds M."/>
            <person name="White B."/>
            <person name="Bason N."/>
            <person name="Mungall K."/>
            <person name="Dougan G."/>
            <person name="Parkhill J."/>
        </authorList>
    </citation>
    <scope>NUCLEOTIDE SEQUENCE [LARGE SCALE GENOMIC DNA]</scope>
    <source>
        <strain>AKU_12601</strain>
    </source>
</reference>
<protein>
    <recommendedName>
        <fullName evidence="1">L-rhamnonate dehydratase</fullName>
        <shortName evidence="1">RhamD</shortName>
        <ecNumber evidence="1">4.2.1.90</ecNumber>
    </recommendedName>
</protein>
<dbReference type="EC" id="4.2.1.90" evidence="1"/>
<dbReference type="EMBL" id="FM200053">
    <property type="protein sequence ID" value="CAR58665.1"/>
    <property type="molecule type" value="Genomic_DNA"/>
</dbReference>
<dbReference type="SMR" id="B5BCQ4"/>
<dbReference type="KEGG" id="sek:SSPA0536"/>
<dbReference type="HOGENOM" id="CLU_030273_1_0_6"/>
<dbReference type="Proteomes" id="UP000001869">
    <property type="component" value="Chromosome"/>
</dbReference>
<dbReference type="GO" id="GO:0050032">
    <property type="term" value="F:L-rhamnonate dehydratase activity"/>
    <property type="evidence" value="ECO:0007669"/>
    <property type="project" value="UniProtKB-UniRule"/>
</dbReference>
<dbReference type="GO" id="GO:0000287">
    <property type="term" value="F:magnesium ion binding"/>
    <property type="evidence" value="ECO:0007669"/>
    <property type="project" value="UniProtKB-UniRule"/>
</dbReference>
<dbReference type="GO" id="GO:0009063">
    <property type="term" value="P:amino acid catabolic process"/>
    <property type="evidence" value="ECO:0007669"/>
    <property type="project" value="InterPro"/>
</dbReference>
<dbReference type="GO" id="GO:0016052">
    <property type="term" value="P:carbohydrate catabolic process"/>
    <property type="evidence" value="ECO:0007669"/>
    <property type="project" value="TreeGrafter"/>
</dbReference>
<dbReference type="CDD" id="cd03327">
    <property type="entry name" value="MR_like_2"/>
    <property type="match status" value="1"/>
</dbReference>
<dbReference type="FunFam" id="3.30.390.10:FF:000007">
    <property type="entry name" value="L-rhamnonate dehydratase"/>
    <property type="match status" value="1"/>
</dbReference>
<dbReference type="FunFam" id="3.20.20.120:FF:000005">
    <property type="entry name" value="Putative L-rhamnonate dehydratase"/>
    <property type="match status" value="1"/>
</dbReference>
<dbReference type="Gene3D" id="3.20.20.120">
    <property type="entry name" value="Enolase-like C-terminal domain"/>
    <property type="match status" value="1"/>
</dbReference>
<dbReference type="Gene3D" id="3.30.390.10">
    <property type="entry name" value="Enolase-like, N-terminal domain"/>
    <property type="match status" value="1"/>
</dbReference>
<dbReference type="HAMAP" id="MF_01288">
    <property type="entry name" value="Rhamnon_dehydrat"/>
    <property type="match status" value="1"/>
</dbReference>
<dbReference type="InterPro" id="IPR036849">
    <property type="entry name" value="Enolase-like_C_sf"/>
</dbReference>
<dbReference type="InterPro" id="IPR029017">
    <property type="entry name" value="Enolase-like_N"/>
</dbReference>
<dbReference type="InterPro" id="IPR029065">
    <property type="entry name" value="Enolase_C-like"/>
</dbReference>
<dbReference type="InterPro" id="IPR023444">
    <property type="entry name" value="L-Rhamnon_dehydrat"/>
</dbReference>
<dbReference type="InterPro" id="IPR018110">
    <property type="entry name" value="Mandel_Rmase/mucon_lact_enz_CS"/>
</dbReference>
<dbReference type="InterPro" id="IPR013342">
    <property type="entry name" value="Mandelate_racemase_C"/>
</dbReference>
<dbReference type="InterPro" id="IPR013341">
    <property type="entry name" value="Mandelate_racemase_N_dom"/>
</dbReference>
<dbReference type="InterPro" id="IPR046945">
    <property type="entry name" value="RHMD-like"/>
</dbReference>
<dbReference type="NCBIfam" id="NF011968">
    <property type="entry name" value="PRK15440.1"/>
    <property type="match status" value="1"/>
</dbReference>
<dbReference type="PANTHER" id="PTHR13794">
    <property type="entry name" value="ENOLASE SUPERFAMILY, MANDELATE RACEMASE"/>
    <property type="match status" value="1"/>
</dbReference>
<dbReference type="PANTHER" id="PTHR13794:SF58">
    <property type="entry name" value="MITOCHONDRIAL ENOLASE SUPERFAMILY MEMBER 1"/>
    <property type="match status" value="1"/>
</dbReference>
<dbReference type="Pfam" id="PF13378">
    <property type="entry name" value="MR_MLE_C"/>
    <property type="match status" value="1"/>
</dbReference>
<dbReference type="Pfam" id="PF02746">
    <property type="entry name" value="MR_MLE_N"/>
    <property type="match status" value="1"/>
</dbReference>
<dbReference type="SFLD" id="SFLDG00179">
    <property type="entry name" value="mandelate_racemase"/>
    <property type="match status" value="1"/>
</dbReference>
<dbReference type="SFLD" id="SFLDF00006">
    <property type="entry name" value="rhamnonate_dehydratase"/>
    <property type="match status" value="1"/>
</dbReference>
<dbReference type="SMART" id="SM00922">
    <property type="entry name" value="MR_MLE"/>
    <property type="match status" value="1"/>
</dbReference>
<dbReference type="SUPFAM" id="SSF51604">
    <property type="entry name" value="Enolase C-terminal domain-like"/>
    <property type="match status" value="1"/>
</dbReference>
<dbReference type="SUPFAM" id="SSF54826">
    <property type="entry name" value="Enolase N-terminal domain-like"/>
    <property type="match status" value="1"/>
</dbReference>
<dbReference type="PROSITE" id="PS00908">
    <property type="entry name" value="MR_MLE_1"/>
    <property type="match status" value="1"/>
</dbReference>
<proteinExistence type="inferred from homology"/>
<organism>
    <name type="scientific">Salmonella paratyphi A (strain AKU_12601)</name>
    <dbReference type="NCBI Taxonomy" id="554290"/>
    <lineage>
        <taxon>Bacteria</taxon>
        <taxon>Pseudomonadati</taxon>
        <taxon>Pseudomonadota</taxon>
        <taxon>Gammaproteobacteria</taxon>
        <taxon>Enterobacterales</taxon>
        <taxon>Enterobacteriaceae</taxon>
        <taxon>Salmonella</taxon>
    </lineage>
</organism>